<feature type="chain" id="PRO_0000250251" description="Undecaprenyl-diphosphatase">
    <location>
        <begin position="1"/>
        <end position="293"/>
    </location>
</feature>
<feature type="transmembrane region" description="Helical" evidence="1">
    <location>
        <begin position="3"/>
        <end position="23"/>
    </location>
</feature>
<feature type="transmembrane region" description="Helical" evidence="1">
    <location>
        <begin position="43"/>
        <end position="63"/>
    </location>
</feature>
<feature type="transmembrane region" description="Helical" evidence="1">
    <location>
        <begin position="85"/>
        <end position="105"/>
    </location>
</feature>
<feature type="transmembrane region" description="Helical" evidence="1">
    <location>
        <begin position="109"/>
        <end position="129"/>
    </location>
</feature>
<feature type="transmembrane region" description="Helical" evidence="1">
    <location>
        <begin position="178"/>
        <end position="198"/>
    </location>
</feature>
<feature type="transmembrane region" description="Helical" evidence="1">
    <location>
        <begin position="203"/>
        <end position="223"/>
    </location>
</feature>
<feature type="transmembrane region" description="Helical" evidence="1">
    <location>
        <begin position="238"/>
        <end position="258"/>
    </location>
</feature>
<feature type="transmembrane region" description="Helical" evidence="1">
    <location>
        <begin position="269"/>
        <end position="289"/>
    </location>
</feature>
<proteinExistence type="inferred from homology"/>
<evidence type="ECO:0000255" key="1">
    <source>
        <dbReference type="HAMAP-Rule" id="MF_01006"/>
    </source>
</evidence>
<gene>
    <name evidence="1" type="primary">uppP</name>
    <name type="ordered locus">Rmet_2705</name>
</gene>
<dbReference type="EC" id="3.6.1.27" evidence="1"/>
<dbReference type="EMBL" id="CP000352">
    <property type="protein sequence ID" value="ABF09578.1"/>
    <property type="molecule type" value="Genomic_DNA"/>
</dbReference>
<dbReference type="RefSeq" id="WP_011517276.1">
    <property type="nucleotide sequence ID" value="NC_007973.1"/>
</dbReference>
<dbReference type="SMR" id="Q1LJU8"/>
<dbReference type="STRING" id="266264.Rmet_2705"/>
<dbReference type="KEGG" id="rme:Rmet_2705"/>
<dbReference type="eggNOG" id="COG1968">
    <property type="taxonomic scope" value="Bacteria"/>
</dbReference>
<dbReference type="HOGENOM" id="CLU_060296_2_0_4"/>
<dbReference type="Proteomes" id="UP000002429">
    <property type="component" value="Chromosome"/>
</dbReference>
<dbReference type="GO" id="GO:0005886">
    <property type="term" value="C:plasma membrane"/>
    <property type="evidence" value="ECO:0007669"/>
    <property type="project" value="UniProtKB-SubCell"/>
</dbReference>
<dbReference type="GO" id="GO:0050380">
    <property type="term" value="F:undecaprenyl-diphosphatase activity"/>
    <property type="evidence" value="ECO:0007669"/>
    <property type="project" value="UniProtKB-UniRule"/>
</dbReference>
<dbReference type="GO" id="GO:0071555">
    <property type="term" value="P:cell wall organization"/>
    <property type="evidence" value="ECO:0007669"/>
    <property type="project" value="UniProtKB-KW"/>
</dbReference>
<dbReference type="GO" id="GO:0009252">
    <property type="term" value="P:peptidoglycan biosynthetic process"/>
    <property type="evidence" value="ECO:0007669"/>
    <property type="project" value="UniProtKB-KW"/>
</dbReference>
<dbReference type="GO" id="GO:0008360">
    <property type="term" value="P:regulation of cell shape"/>
    <property type="evidence" value="ECO:0007669"/>
    <property type="project" value="UniProtKB-KW"/>
</dbReference>
<dbReference type="GO" id="GO:0046677">
    <property type="term" value="P:response to antibiotic"/>
    <property type="evidence" value="ECO:0007669"/>
    <property type="project" value="UniProtKB-UniRule"/>
</dbReference>
<dbReference type="HAMAP" id="MF_01006">
    <property type="entry name" value="Undec_diphosphatase"/>
    <property type="match status" value="1"/>
</dbReference>
<dbReference type="InterPro" id="IPR003824">
    <property type="entry name" value="UppP"/>
</dbReference>
<dbReference type="NCBIfam" id="NF001389">
    <property type="entry name" value="PRK00281.1-2"/>
    <property type="match status" value="1"/>
</dbReference>
<dbReference type="PANTHER" id="PTHR30622">
    <property type="entry name" value="UNDECAPRENYL-DIPHOSPHATASE"/>
    <property type="match status" value="1"/>
</dbReference>
<dbReference type="PANTHER" id="PTHR30622:SF3">
    <property type="entry name" value="UNDECAPRENYL-DIPHOSPHATASE"/>
    <property type="match status" value="1"/>
</dbReference>
<dbReference type="Pfam" id="PF02673">
    <property type="entry name" value="BacA"/>
    <property type="match status" value="1"/>
</dbReference>
<keyword id="KW-0046">Antibiotic resistance</keyword>
<keyword id="KW-0997">Cell inner membrane</keyword>
<keyword id="KW-1003">Cell membrane</keyword>
<keyword id="KW-0133">Cell shape</keyword>
<keyword id="KW-0961">Cell wall biogenesis/degradation</keyword>
<keyword id="KW-0378">Hydrolase</keyword>
<keyword id="KW-0472">Membrane</keyword>
<keyword id="KW-0573">Peptidoglycan synthesis</keyword>
<keyword id="KW-1185">Reference proteome</keyword>
<keyword id="KW-0812">Transmembrane</keyword>
<keyword id="KW-1133">Transmembrane helix</keyword>
<protein>
    <recommendedName>
        <fullName evidence="1">Undecaprenyl-diphosphatase</fullName>
        <ecNumber evidence="1">3.6.1.27</ecNumber>
    </recommendedName>
    <alternativeName>
        <fullName evidence="1">Bacitracin resistance protein</fullName>
    </alternativeName>
    <alternativeName>
        <fullName evidence="1">Undecaprenyl pyrophosphate phosphatase</fullName>
    </alternativeName>
</protein>
<reference key="1">
    <citation type="journal article" date="2010" name="PLoS ONE">
        <title>The complete genome sequence of Cupriavidus metallidurans strain CH34, a master survivalist in harsh and anthropogenic environments.</title>
        <authorList>
            <person name="Janssen P.J."/>
            <person name="Van Houdt R."/>
            <person name="Moors H."/>
            <person name="Monsieurs P."/>
            <person name="Morin N."/>
            <person name="Michaux A."/>
            <person name="Benotmane M.A."/>
            <person name="Leys N."/>
            <person name="Vallaeys T."/>
            <person name="Lapidus A."/>
            <person name="Monchy S."/>
            <person name="Medigue C."/>
            <person name="Taghavi S."/>
            <person name="McCorkle S."/>
            <person name="Dunn J."/>
            <person name="van der Lelie D."/>
            <person name="Mergeay M."/>
        </authorList>
    </citation>
    <scope>NUCLEOTIDE SEQUENCE [LARGE SCALE GENOMIC DNA]</scope>
    <source>
        <strain>ATCC 43123 / DSM 2839 / NBRC 102507 / CH34</strain>
    </source>
</reference>
<name>UPPP_CUPMC</name>
<sequence length="293" mass="31757">MDIALALKAVILGIVEGLTEFLPISSTGHLILAGQLLDFNDEKGKIFEIVIQFGAILAVCWEFRQRIGTVISGLASDVKSQRFAVNVIVATIPAIVLALVFGKWIKAHLFNPITVATAFIIGGVVILLAEWREARRGTVSAPQGNALLEAAKAGAPRIESVDDLNWRDALKVGLAQCFALVPGTSRSGATIIGGMLFGLSRQVATEFSFFLAIPVIFGATVYELYKARALLSADDLGIFAVGFVFAFLSAFLCVRWLLRFVATHDFKPFAWYRIAFGIIVLLTAWTGVISWHA</sequence>
<accession>Q1LJU8</accession>
<organism>
    <name type="scientific">Cupriavidus metallidurans (strain ATCC 43123 / DSM 2839 / NBRC 102507 / CH34)</name>
    <name type="common">Ralstonia metallidurans</name>
    <dbReference type="NCBI Taxonomy" id="266264"/>
    <lineage>
        <taxon>Bacteria</taxon>
        <taxon>Pseudomonadati</taxon>
        <taxon>Pseudomonadota</taxon>
        <taxon>Betaproteobacteria</taxon>
        <taxon>Burkholderiales</taxon>
        <taxon>Burkholderiaceae</taxon>
        <taxon>Cupriavidus</taxon>
    </lineage>
</organism>
<comment type="function">
    <text evidence="1">Catalyzes the dephosphorylation of undecaprenyl diphosphate (UPP). Confers resistance to bacitracin.</text>
</comment>
<comment type="catalytic activity">
    <reaction evidence="1">
        <text>di-trans,octa-cis-undecaprenyl diphosphate + H2O = di-trans,octa-cis-undecaprenyl phosphate + phosphate + H(+)</text>
        <dbReference type="Rhea" id="RHEA:28094"/>
        <dbReference type="ChEBI" id="CHEBI:15377"/>
        <dbReference type="ChEBI" id="CHEBI:15378"/>
        <dbReference type="ChEBI" id="CHEBI:43474"/>
        <dbReference type="ChEBI" id="CHEBI:58405"/>
        <dbReference type="ChEBI" id="CHEBI:60392"/>
        <dbReference type="EC" id="3.6.1.27"/>
    </reaction>
</comment>
<comment type="subcellular location">
    <subcellularLocation>
        <location evidence="1">Cell inner membrane</location>
        <topology evidence="1">Multi-pass membrane protein</topology>
    </subcellularLocation>
</comment>
<comment type="miscellaneous">
    <text>Bacitracin is thought to be involved in the inhibition of peptidoglycan synthesis by sequestering undecaprenyl diphosphate, thereby reducing the pool of lipid carrier available.</text>
</comment>
<comment type="similarity">
    <text evidence="1">Belongs to the UppP family.</text>
</comment>